<protein>
    <recommendedName>
        <fullName evidence="1">Large ribosomal subunit protein eL43</fullName>
    </recommendedName>
    <alternativeName>
        <fullName evidence="2">50S ribosomal protein L37Ae</fullName>
    </alternativeName>
    <alternativeName>
        <fullName evidence="1">Ribosomal protein L43e</fullName>
    </alternativeName>
</protein>
<evidence type="ECO:0000255" key="1">
    <source>
        <dbReference type="HAMAP-Rule" id="MF_00327"/>
    </source>
</evidence>
<evidence type="ECO:0000305" key="2"/>
<organism>
    <name type="scientific">Methanococcus maripaludis (strain C7 / ATCC BAA-1331)</name>
    <dbReference type="NCBI Taxonomy" id="426368"/>
    <lineage>
        <taxon>Archaea</taxon>
        <taxon>Methanobacteriati</taxon>
        <taxon>Methanobacteriota</taxon>
        <taxon>Methanomada group</taxon>
        <taxon>Methanococci</taxon>
        <taxon>Methanococcales</taxon>
        <taxon>Methanococcaceae</taxon>
        <taxon>Methanococcus</taxon>
    </lineage>
</organism>
<comment type="cofactor">
    <cofactor evidence="1">
        <name>Zn(2+)</name>
        <dbReference type="ChEBI" id="CHEBI:29105"/>
    </cofactor>
    <text evidence="1">Binds 1 zinc ion per subunit.</text>
</comment>
<comment type="similarity">
    <text evidence="1">Belongs to the eukaryotic ribosomal protein eL43 family.</text>
</comment>
<gene>
    <name evidence="1" type="primary">rpl37ae</name>
    <name type="ordered locus">MmarC7_1251</name>
</gene>
<sequence length="96" mass="10717">MVEFSHTKKIGSAGRFGSRYGRKIRVRLRDVEIKQKKEYKCPVCAFPKLKRVGTSIWVCDKCGAKIAGGAYTPETGAGKVVTKAIRRVIESKSREI</sequence>
<proteinExistence type="inferred from homology"/>
<name>RL37A_METM7</name>
<keyword id="KW-0479">Metal-binding</keyword>
<keyword id="KW-0687">Ribonucleoprotein</keyword>
<keyword id="KW-0689">Ribosomal protein</keyword>
<keyword id="KW-0694">RNA-binding</keyword>
<keyword id="KW-0862">Zinc</keyword>
<keyword id="KW-0863">Zinc-finger</keyword>
<feature type="chain" id="PRO_1000005037" description="Large ribosomal subunit protein eL43">
    <location>
        <begin position="1"/>
        <end position="96"/>
    </location>
</feature>
<feature type="zinc finger region" description="C4-type" evidence="1">
    <location>
        <begin position="41"/>
        <end position="62"/>
    </location>
</feature>
<reference key="1">
    <citation type="submission" date="2007-06" db="EMBL/GenBank/DDBJ databases">
        <title>Complete sequence of Methanococcus maripaludis C7.</title>
        <authorList>
            <consortium name="US DOE Joint Genome Institute"/>
            <person name="Copeland A."/>
            <person name="Lucas S."/>
            <person name="Lapidus A."/>
            <person name="Barry K."/>
            <person name="Glavina del Rio T."/>
            <person name="Dalin E."/>
            <person name="Tice H."/>
            <person name="Pitluck S."/>
            <person name="Clum A."/>
            <person name="Schmutz J."/>
            <person name="Larimer F."/>
            <person name="Land M."/>
            <person name="Hauser L."/>
            <person name="Kyrpides N."/>
            <person name="Anderson I."/>
            <person name="Sieprawska-Lupa M."/>
            <person name="Whitman W.B."/>
            <person name="Richardson P."/>
        </authorList>
    </citation>
    <scope>NUCLEOTIDE SEQUENCE [LARGE SCALE GENOMIC DNA]</scope>
    <source>
        <strain>C7 / ATCC BAA-1331</strain>
    </source>
</reference>
<dbReference type="EMBL" id="CP000745">
    <property type="protein sequence ID" value="ABR66314.1"/>
    <property type="molecule type" value="Genomic_DNA"/>
</dbReference>
<dbReference type="SMR" id="A6VIN8"/>
<dbReference type="STRING" id="426368.MmarC7_1251"/>
<dbReference type="KEGG" id="mmz:MmarC7_1251"/>
<dbReference type="eggNOG" id="arCOG04208">
    <property type="taxonomic scope" value="Archaea"/>
</dbReference>
<dbReference type="HOGENOM" id="CLU_141199_2_0_2"/>
<dbReference type="OrthoDB" id="372011at2157"/>
<dbReference type="GO" id="GO:1990904">
    <property type="term" value="C:ribonucleoprotein complex"/>
    <property type="evidence" value="ECO:0007669"/>
    <property type="project" value="UniProtKB-KW"/>
</dbReference>
<dbReference type="GO" id="GO:0005840">
    <property type="term" value="C:ribosome"/>
    <property type="evidence" value="ECO:0007669"/>
    <property type="project" value="UniProtKB-KW"/>
</dbReference>
<dbReference type="GO" id="GO:0070180">
    <property type="term" value="F:large ribosomal subunit rRNA binding"/>
    <property type="evidence" value="ECO:0007669"/>
    <property type="project" value="UniProtKB-UniRule"/>
</dbReference>
<dbReference type="GO" id="GO:0003735">
    <property type="term" value="F:structural constituent of ribosome"/>
    <property type="evidence" value="ECO:0007669"/>
    <property type="project" value="InterPro"/>
</dbReference>
<dbReference type="GO" id="GO:0008270">
    <property type="term" value="F:zinc ion binding"/>
    <property type="evidence" value="ECO:0007669"/>
    <property type="project" value="UniProtKB-UniRule"/>
</dbReference>
<dbReference type="GO" id="GO:0006412">
    <property type="term" value="P:translation"/>
    <property type="evidence" value="ECO:0007669"/>
    <property type="project" value="UniProtKB-UniRule"/>
</dbReference>
<dbReference type="Gene3D" id="2.20.25.30">
    <property type="match status" value="1"/>
</dbReference>
<dbReference type="HAMAP" id="MF_00327">
    <property type="entry name" value="Ribosomal_eL43"/>
    <property type="match status" value="1"/>
</dbReference>
<dbReference type="InterPro" id="IPR011331">
    <property type="entry name" value="Ribosomal_eL37/eL43"/>
</dbReference>
<dbReference type="InterPro" id="IPR002674">
    <property type="entry name" value="Ribosomal_eL43"/>
</dbReference>
<dbReference type="InterPro" id="IPR050522">
    <property type="entry name" value="Ribosomal_protein_eL43"/>
</dbReference>
<dbReference type="InterPro" id="IPR011332">
    <property type="entry name" value="Ribosomal_zn-bd"/>
</dbReference>
<dbReference type="NCBIfam" id="TIGR00280">
    <property type="entry name" value="eL43_euk_arch"/>
    <property type="match status" value="1"/>
</dbReference>
<dbReference type="NCBIfam" id="NF003058">
    <property type="entry name" value="PRK03976.1"/>
    <property type="match status" value="1"/>
</dbReference>
<dbReference type="PANTHER" id="PTHR48129">
    <property type="entry name" value="60S RIBOSOMAL PROTEIN L37A"/>
    <property type="match status" value="1"/>
</dbReference>
<dbReference type="PANTHER" id="PTHR48129:SF1">
    <property type="entry name" value="LARGE RIBOSOMAL SUBUNIT PROTEIN EL43"/>
    <property type="match status" value="1"/>
</dbReference>
<dbReference type="Pfam" id="PF01780">
    <property type="entry name" value="Ribosomal_L37ae"/>
    <property type="match status" value="1"/>
</dbReference>
<dbReference type="SUPFAM" id="SSF57829">
    <property type="entry name" value="Zn-binding ribosomal proteins"/>
    <property type="match status" value="1"/>
</dbReference>
<accession>A6VIN8</accession>